<proteinExistence type="evidence at protein level"/>
<keyword id="KW-0025">Alternative splicing</keyword>
<keyword id="KW-0963">Cytoplasm</keyword>
<keyword id="KW-0446">Lipid-binding</keyword>
<keyword id="KW-0813">Transport</keyword>
<sequence length="132" mass="14832">MSSFLGKWKLSETHNFDAVMSKLGVSWPIRQMGNTVTPTVTFTMDGDTMTMLTESTFKNLSVTFKFGEEFDEKTSDGRNVKSVVTKDSESKITQTQKDAKNTTVIVREIVGDTMKTTVTVDDVTAIRNYKRL</sequence>
<accession>O45035</accession>
<accession>O45036</accession>
<accession>Q26517</accession>
<accession>Q86D72</accession>
<accession>Q86D73</accession>
<accession>Q86D74</accession>
<accession>Q86D75</accession>
<accession>Q86D76</accession>
<accession>Q9BME8</accession>
<protein>
    <recommendedName>
        <fullName>Fatty acid-binding protein</fullName>
    </recommendedName>
    <alternativeName>
        <fullName>Sj-FABPc</fullName>
    </alternativeName>
    <alternativeName>
        <fullName>Sj14FABP</fullName>
    </alternativeName>
</protein>
<feature type="chain" id="PRO_0000067357" description="Fatty acid-binding protein">
    <location>
        <begin position="1"/>
        <end position="132"/>
    </location>
</feature>
<feature type="binding site" evidence="2">
    <location>
        <position position="107"/>
    </location>
    <ligand>
        <name>(5Z,8Z,11Z,14Z)-eicosatetraenoate</name>
        <dbReference type="ChEBI" id="CHEBI:32395"/>
    </ligand>
</feature>
<feature type="binding site" evidence="2">
    <location>
        <position position="107"/>
    </location>
    <ligand>
        <name>(9Z)-octadecenoate</name>
        <dbReference type="ChEBI" id="CHEBI:30823"/>
    </ligand>
</feature>
<feature type="binding site" evidence="2">
    <location>
        <begin position="127"/>
        <end position="129"/>
    </location>
    <ligand>
        <name>(5Z,8Z,11Z,14Z)-eicosatetraenoate</name>
        <dbReference type="ChEBI" id="CHEBI:32395"/>
    </ligand>
</feature>
<feature type="binding site" evidence="2">
    <location>
        <begin position="127"/>
        <end position="129"/>
    </location>
    <ligand>
        <name>(9Z)-octadecenoate</name>
        <dbReference type="ChEBI" id="CHEBI:30823"/>
    </ligand>
</feature>
<feature type="splice variant" id="VSP_010233" description="In isoform 2." evidence="3">
    <location>
        <begin position="24"/>
        <end position="35"/>
    </location>
</feature>
<feature type="sequence variant" description="In variants C, D, E, F and H.">
    <original>T</original>
    <variation>S</variation>
    <location>
        <position position="13"/>
    </location>
</feature>
<feature type="sequence variant" description="In variants C, D, E, F and H.">
    <original>P</original>
    <variation>A</variation>
    <location>
        <position position="28"/>
    </location>
</feature>
<feature type="sequence variant" description="In variants C, D, E, F and H.">
    <original>I</original>
    <variation>T</variation>
    <location>
        <position position="29"/>
    </location>
</feature>
<feature type="sequence variant" description="In variants C, D, E, F and H.">
    <original>M</original>
    <variation>I</variation>
    <location>
        <position position="32"/>
    </location>
</feature>
<feature type="sequence variant" description="In variants D, E and F.">
    <original>N</original>
    <variation>S</variation>
    <location>
        <position position="79"/>
    </location>
</feature>
<feature type="sequence variant" description="In variants D and E.">
    <original>E</original>
    <variation>D</variation>
    <location>
        <position position="89"/>
    </location>
</feature>
<feature type="sequence variant" description="In variants C, D, E, F and H.">
    <original>A</original>
    <variation>S</variation>
    <location>
        <position position="99"/>
    </location>
</feature>
<feature type="sequence variant" description="In variants C, D and E.">
    <original>G</original>
    <variation>C</variation>
    <location>
        <position position="111"/>
    </location>
</feature>
<feature type="sequence variant" description="In variant D.">
    <original>D</original>
    <variation>N</variation>
    <location>
        <position position="121"/>
    </location>
</feature>
<feature type="sequence variant" description="In variants C, D and E.">
    <original>D</original>
    <variation>N</variation>
    <location>
        <position position="122"/>
    </location>
</feature>
<feature type="sequence variant" description="In variant B.">
    <original>V</original>
    <variation>F</variation>
    <location>
        <position position="123"/>
    </location>
</feature>
<feature type="sequence variant" description="In variants C, D and E.">
    <original>R</original>
    <variation>Q</variation>
    <location>
        <position position="131"/>
    </location>
</feature>
<feature type="sequence conflict" description="In Ref. 1; AAA64426." evidence="4" ref="1">
    <original>Q</original>
    <variation>H</variation>
    <location>
        <position position="94"/>
    </location>
</feature>
<evidence type="ECO:0000250" key="1"/>
<evidence type="ECO:0000250" key="2">
    <source>
        <dbReference type="UniProtKB" id="P29498"/>
    </source>
</evidence>
<evidence type="ECO:0000303" key="3">
    <source>
    </source>
</evidence>
<evidence type="ECO:0000305" key="4"/>
<reference key="1">
    <citation type="journal article" date="1994" name="Gene">
        <title>Gene cloning, overproduction and purification of a functionally active cytoplasmic fatty acid-binding protein (Sj-FABPC) from the human blood fluke Schistosoma japonicum.</title>
        <authorList>
            <person name="Becker M.M."/>
            <person name="Kalinna B.H."/>
            <person name="Waine G.J."/>
            <person name="McManus D.P."/>
        </authorList>
    </citation>
    <scope>NUCLEOTIDE SEQUENCE [MRNA] (ISOFORM 1)</scope>
    <source>
        <strain>Chinese</strain>
    </source>
</reference>
<reference key="2">
    <citation type="journal article" date="2000" name="Biochim. Biophys. Acta">
        <title>Molecular and immunological characterisation of a polymorphic cytosolic fatty acid binding protein from the human blood fluke of humans, Schistosoma japonicum.</title>
        <authorList>
            <person name="Scott J.C."/>
            <person name="Kennedy M.W."/>
            <person name="McManus D.P."/>
        </authorList>
    </citation>
    <scope>NUCLEOTIDE SEQUENCE [MRNA] (ISOFORMS 1 AND 2)</scope>
    <source>
        <strain>Philippines</strain>
    </source>
</reference>
<reference key="3">
    <citation type="submission" date="2000-12" db="EMBL/GenBank/DDBJ databases">
        <title>Gene cloning, overproduction and preliminary vaccine testing of Schistosoma japonicum Chinese mainland strain fatty acid-binding protein Sj14FABP.</title>
        <authorList>
            <person name="Liu J."/>
            <person name="Cai X."/>
            <person name="Lin J."/>
            <person name="Fu Z."/>
            <person name="Ye P."/>
            <person name="Yang G."/>
            <person name="Shi F."/>
            <person name="Cai Y."/>
            <person name="Shen W."/>
            <person name="Martin T."/>
            <person name="Wu X."/>
        </authorList>
    </citation>
    <scope>NUCLEOTIDE SEQUENCE [MRNA] (ISOFORM 1)</scope>
    <source>
        <strain>Chinese</strain>
    </source>
</reference>
<reference key="4">
    <citation type="journal article" date="2000" name="Biochem. J.">
        <title>Sj-FABPc fatty-acid-binding protein of the human blood fluke Schistosoma japonicum: structural and functional characterization and unusual solvent exposure of a portal-proximal tryptophan residue.</title>
        <authorList>
            <person name="Kennedy M.W."/>
            <person name="Scott J.C."/>
            <person name="Lo S."/>
            <person name="Beauchamp J."/>
            <person name="McManus D.P."/>
        </authorList>
    </citation>
    <scope>CHARACTERIZATION</scope>
    <source>
        <strain>Philippines</strain>
    </source>
</reference>
<organism>
    <name type="scientific">Schistosoma japonicum</name>
    <name type="common">Blood fluke</name>
    <dbReference type="NCBI Taxonomy" id="6182"/>
    <lineage>
        <taxon>Eukaryota</taxon>
        <taxon>Metazoa</taxon>
        <taxon>Spiralia</taxon>
        <taxon>Lophotrochozoa</taxon>
        <taxon>Platyhelminthes</taxon>
        <taxon>Trematoda</taxon>
        <taxon>Digenea</taxon>
        <taxon>Strigeidida</taxon>
        <taxon>Schistosomatoidea</taxon>
        <taxon>Schistosomatidae</taxon>
        <taxon>Schistosoma</taxon>
    </lineage>
</organism>
<name>FABP_SCHJA</name>
<comment type="function">
    <text>May play a role in the transport of fatty acids. Binds to various fatty acids but not retinoids.</text>
</comment>
<comment type="subcellular location">
    <subcellularLocation>
        <location>Cytoplasm</location>
    </subcellularLocation>
</comment>
<comment type="alternative products">
    <event type="alternative splicing"/>
    <isoform>
        <id>O45035-1</id>
        <name>1</name>
        <sequence type="displayed"/>
    </isoform>
    <isoform>
        <id>O45035-2</id>
        <name>2</name>
        <sequence type="described" ref="VSP_010233"/>
    </isoform>
</comment>
<comment type="domain">
    <text evidence="1">Forms a beta-barrel structure that accommodates hydrophobic ligands in its interior.</text>
</comment>
<comment type="similarity">
    <text evidence="4">Belongs to the calycin superfamily. Fatty-acid binding protein (FABP) family.</text>
</comment>
<dbReference type="EMBL" id="L23322">
    <property type="protein sequence ID" value="AAA64426.1"/>
    <property type="molecule type" value="mRNA"/>
</dbReference>
<dbReference type="EMBL" id="AF044409">
    <property type="protein sequence ID" value="AAC00516.1"/>
    <property type="molecule type" value="mRNA"/>
</dbReference>
<dbReference type="EMBL" id="AF044410">
    <property type="protein sequence ID" value="AAC00517.1"/>
    <property type="molecule type" value="mRNA"/>
</dbReference>
<dbReference type="EMBL" id="AY257686">
    <property type="protein sequence ID" value="AAP14670.1"/>
    <property type="molecule type" value="mRNA"/>
</dbReference>
<dbReference type="EMBL" id="AY257687">
    <property type="protein sequence ID" value="AAP14671.1"/>
    <property type="molecule type" value="mRNA"/>
</dbReference>
<dbReference type="EMBL" id="AY257688">
    <property type="protein sequence ID" value="AAP14672.1"/>
    <property type="molecule type" value="mRNA"/>
</dbReference>
<dbReference type="EMBL" id="AY257689">
    <property type="protein sequence ID" value="AAP14673.1"/>
    <property type="molecule type" value="mRNA"/>
</dbReference>
<dbReference type="EMBL" id="AY257690">
    <property type="protein sequence ID" value="AAP14674.1"/>
    <property type="molecule type" value="mRNA"/>
</dbReference>
<dbReference type="EMBL" id="AY257691">
    <property type="protein sequence ID" value="AAP14675.1"/>
    <property type="molecule type" value="mRNA"/>
</dbReference>
<dbReference type="EMBL" id="AF331756">
    <property type="protein sequence ID" value="AAG50052.1"/>
    <property type="molecule type" value="mRNA"/>
</dbReference>
<dbReference type="SMR" id="O45035"/>
<dbReference type="GO" id="GO:0005737">
    <property type="term" value="C:cytoplasm"/>
    <property type="evidence" value="ECO:0007669"/>
    <property type="project" value="UniProtKB-SubCell"/>
</dbReference>
<dbReference type="GO" id="GO:0008289">
    <property type="term" value="F:lipid binding"/>
    <property type="evidence" value="ECO:0007669"/>
    <property type="project" value="UniProtKB-KW"/>
</dbReference>
<dbReference type="CDD" id="cd00742">
    <property type="entry name" value="FABP"/>
    <property type="match status" value="1"/>
</dbReference>
<dbReference type="FunFam" id="2.40.128.20:FF:000001">
    <property type="entry name" value="Fatty acid-binding protein, adipocyte"/>
    <property type="match status" value="1"/>
</dbReference>
<dbReference type="Gene3D" id="2.40.128.20">
    <property type="match status" value="1"/>
</dbReference>
<dbReference type="InterPro" id="IPR012674">
    <property type="entry name" value="Calycin"/>
</dbReference>
<dbReference type="InterPro" id="IPR000463">
    <property type="entry name" value="Fatty_acid-bd"/>
</dbReference>
<dbReference type="InterPro" id="IPR031259">
    <property type="entry name" value="ILBP"/>
</dbReference>
<dbReference type="InterPro" id="IPR000566">
    <property type="entry name" value="Lipocln_cytosolic_FA-bd_dom"/>
</dbReference>
<dbReference type="PANTHER" id="PTHR11955">
    <property type="entry name" value="FATTY ACID BINDING PROTEIN"/>
    <property type="match status" value="1"/>
</dbReference>
<dbReference type="Pfam" id="PF00061">
    <property type="entry name" value="Lipocalin"/>
    <property type="match status" value="1"/>
</dbReference>
<dbReference type="PRINTS" id="PR00178">
    <property type="entry name" value="FATTYACIDBP"/>
</dbReference>
<dbReference type="SUPFAM" id="SSF50814">
    <property type="entry name" value="Lipocalins"/>
    <property type="match status" value="1"/>
</dbReference>
<dbReference type="PROSITE" id="PS00214">
    <property type="entry name" value="FABP"/>
    <property type="match status" value="1"/>
</dbReference>